<keyword id="KW-0903">Direct protein sequencing</keyword>
<feature type="chain" id="PRO_0000355613" description="Unknown protein 7">
    <location>
        <begin position="1" status="less than"/>
        <end position="12" status="greater than"/>
    </location>
</feature>
<feature type="unsure residue" description="L or I">
    <location>
        <position position="3"/>
    </location>
</feature>
<feature type="unsure residue" description="L or I">
    <location>
        <position position="9"/>
    </location>
</feature>
<feature type="non-terminal residue">
    <location>
        <position position="1"/>
    </location>
</feature>
<feature type="non-terminal residue">
    <location>
        <position position="12"/>
    </location>
</feature>
<name>UP07_DAUCA</name>
<evidence type="ECO:0000305" key="1"/>
<organism>
    <name type="scientific">Daucus carota</name>
    <name type="common">Wild carrot</name>
    <dbReference type="NCBI Taxonomy" id="4039"/>
    <lineage>
        <taxon>Eukaryota</taxon>
        <taxon>Viridiplantae</taxon>
        <taxon>Streptophyta</taxon>
        <taxon>Embryophyta</taxon>
        <taxon>Tracheophyta</taxon>
        <taxon>Spermatophyta</taxon>
        <taxon>Magnoliopsida</taxon>
        <taxon>eudicotyledons</taxon>
        <taxon>Gunneridae</taxon>
        <taxon>Pentapetalae</taxon>
        <taxon>asterids</taxon>
        <taxon>campanulids</taxon>
        <taxon>Apiales</taxon>
        <taxon>Apiaceae</taxon>
        <taxon>Apioideae</taxon>
        <taxon>Scandiceae</taxon>
        <taxon>Daucinae</taxon>
        <taxon>Daucus</taxon>
        <taxon>Daucus sect. Daucus</taxon>
    </lineage>
</organism>
<protein>
    <recommendedName>
        <fullName>Unknown protein 7</fullName>
    </recommendedName>
</protein>
<reference evidence="1" key="1">
    <citation type="submission" date="2008-07" db="UniProtKB">
        <authorList>
            <person name="Almagro L."/>
            <person name="Belchi-Navarro S."/>
            <person name="Casado-Vela J."/>
            <person name="Pedreno M.A."/>
        </authorList>
    </citation>
    <scope>PROTEIN SEQUENCE</scope>
</reference>
<proteinExistence type="evidence at protein level"/>
<sequence>YGLAADNVLDAR</sequence>
<accession>P86070</accession>